<keyword id="KW-0067">ATP-binding</keyword>
<keyword id="KW-0963">Cytoplasm</keyword>
<keyword id="KW-0227">DNA damage</keyword>
<keyword id="KW-0234">DNA repair</keyword>
<keyword id="KW-0235">DNA replication</keyword>
<keyword id="KW-0238">DNA-binding</keyword>
<keyword id="KW-0547">Nucleotide-binding</keyword>
<keyword id="KW-0742">SOS response</keyword>
<gene>
    <name evidence="1" type="primary">recF</name>
    <name type="ordered locus">VV1_0997</name>
</gene>
<protein>
    <recommendedName>
        <fullName evidence="1">DNA replication and repair protein RecF</fullName>
    </recommendedName>
</protein>
<proteinExistence type="inferred from homology"/>
<reference key="1">
    <citation type="submission" date="2002-12" db="EMBL/GenBank/DDBJ databases">
        <title>Complete genome sequence of Vibrio vulnificus CMCP6.</title>
        <authorList>
            <person name="Rhee J.H."/>
            <person name="Kim S.Y."/>
            <person name="Chung S.S."/>
            <person name="Kim J.J."/>
            <person name="Moon Y.H."/>
            <person name="Jeong H."/>
            <person name="Choy H.E."/>
        </authorList>
    </citation>
    <scope>NUCLEOTIDE SEQUENCE [LARGE SCALE GENOMIC DNA]</scope>
    <source>
        <strain>CMCP6</strain>
    </source>
</reference>
<dbReference type="EMBL" id="AE016795">
    <property type="protein sequence ID" value="AAO09486.1"/>
    <property type="molecule type" value="Genomic_DNA"/>
</dbReference>
<dbReference type="RefSeq" id="WP_011079033.1">
    <property type="nucleotide sequence ID" value="NC_004459.3"/>
</dbReference>
<dbReference type="SMR" id="Q8DDJ1"/>
<dbReference type="KEGG" id="vvu:VV1_0997"/>
<dbReference type="HOGENOM" id="CLU_040267_0_0_6"/>
<dbReference type="Proteomes" id="UP000002275">
    <property type="component" value="Chromosome 1"/>
</dbReference>
<dbReference type="GO" id="GO:0005737">
    <property type="term" value="C:cytoplasm"/>
    <property type="evidence" value="ECO:0007669"/>
    <property type="project" value="UniProtKB-SubCell"/>
</dbReference>
<dbReference type="GO" id="GO:0005524">
    <property type="term" value="F:ATP binding"/>
    <property type="evidence" value="ECO:0007669"/>
    <property type="project" value="UniProtKB-UniRule"/>
</dbReference>
<dbReference type="GO" id="GO:0003697">
    <property type="term" value="F:single-stranded DNA binding"/>
    <property type="evidence" value="ECO:0007669"/>
    <property type="project" value="UniProtKB-UniRule"/>
</dbReference>
<dbReference type="GO" id="GO:0006260">
    <property type="term" value="P:DNA replication"/>
    <property type="evidence" value="ECO:0007669"/>
    <property type="project" value="UniProtKB-UniRule"/>
</dbReference>
<dbReference type="GO" id="GO:0000731">
    <property type="term" value="P:DNA synthesis involved in DNA repair"/>
    <property type="evidence" value="ECO:0007669"/>
    <property type="project" value="TreeGrafter"/>
</dbReference>
<dbReference type="GO" id="GO:0006302">
    <property type="term" value="P:double-strand break repair"/>
    <property type="evidence" value="ECO:0007669"/>
    <property type="project" value="TreeGrafter"/>
</dbReference>
<dbReference type="GO" id="GO:0009432">
    <property type="term" value="P:SOS response"/>
    <property type="evidence" value="ECO:0007669"/>
    <property type="project" value="UniProtKB-UniRule"/>
</dbReference>
<dbReference type="FunFam" id="1.20.1050.90:FF:000001">
    <property type="entry name" value="DNA replication and repair protein RecF"/>
    <property type="match status" value="1"/>
</dbReference>
<dbReference type="Gene3D" id="3.40.50.300">
    <property type="entry name" value="P-loop containing nucleotide triphosphate hydrolases"/>
    <property type="match status" value="1"/>
</dbReference>
<dbReference type="Gene3D" id="1.20.1050.90">
    <property type="entry name" value="RecF/RecN/SMC, N-terminal domain"/>
    <property type="match status" value="1"/>
</dbReference>
<dbReference type="HAMAP" id="MF_00365">
    <property type="entry name" value="RecF"/>
    <property type="match status" value="1"/>
</dbReference>
<dbReference type="InterPro" id="IPR001238">
    <property type="entry name" value="DNA-binding_RecF"/>
</dbReference>
<dbReference type="InterPro" id="IPR018078">
    <property type="entry name" value="DNA-binding_RecF_CS"/>
</dbReference>
<dbReference type="InterPro" id="IPR027417">
    <property type="entry name" value="P-loop_NTPase"/>
</dbReference>
<dbReference type="InterPro" id="IPR003395">
    <property type="entry name" value="RecF/RecN/SMC_N"/>
</dbReference>
<dbReference type="InterPro" id="IPR042174">
    <property type="entry name" value="RecF_2"/>
</dbReference>
<dbReference type="NCBIfam" id="TIGR00611">
    <property type="entry name" value="recf"/>
    <property type="match status" value="1"/>
</dbReference>
<dbReference type="PANTHER" id="PTHR32182">
    <property type="entry name" value="DNA REPLICATION AND REPAIR PROTEIN RECF"/>
    <property type="match status" value="1"/>
</dbReference>
<dbReference type="PANTHER" id="PTHR32182:SF0">
    <property type="entry name" value="DNA REPLICATION AND REPAIR PROTEIN RECF"/>
    <property type="match status" value="1"/>
</dbReference>
<dbReference type="Pfam" id="PF02463">
    <property type="entry name" value="SMC_N"/>
    <property type="match status" value="1"/>
</dbReference>
<dbReference type="SUPFAM" id="SSF52540">
    <property type="entry name" value="P-loop containing nucleoside triphosphate hydrolases"/>
    <property type="match status" value="1"/>
</dbReference>
<dbReference type="PROSITE" id="PS00617">
    <property type="entry name" value="RECF_1"/>
    <property type="match status" value="1"/>
</dbReference>
<dbReference type="PROSITE" id="PS00618">
    <property type="entry name" value="RECF_2"/>
    <property type="match status" value="1"/>
</dbReference>
<sequence length="359" mass="40997">MPLSRLIIQQFRNIKACDIALSPGFNFLIGPNGSGKTSVLEAIYLLGHGRSFKSALTGRVIQNECDQLFVYGRFLNSDQFELPIGINKQRDGTTEVKIGGQSGQKLAQLAQVLPLQLIHPEGFDLLTDGPKHRRAFIDWGVFHTEPAFYDAWGRFKRLNKQRNALLKSAKSYQELSYWDKEMARLAELISQWRADYVAQMQSKAEQLCQEFLPEFHIQLKYYRGWEKETPYQQILEENFERDQTLGYTVSGPNKADLRIKVNNTPVEDVLSRGQLKLMVCALRLAQGQHLTEKTGKQCVYLIDDFASELDSQRRKRLADCLKQTGAQVFVSSITENQISDMRDDSGRLFHVEQGVIEQG</sequence>
<comment type="function">
    <text evidence="1">The RecF protein is involved in DNA metabolism; it is required for DNA replication and normal SOS inducibility. RecF binds preferentially to single-stranded, linear DNA. It also seems to bind ATP.</text>
</comment>
<comment type="subcellular location">
    <subcellularLocation>
        <location evidence="1">Cytoplasm</location>
    </subcellularLocation>
</comment>
<comment type="similarity">
    <text evidence="1">Belongs to the RecF family.</text>
</comment>
<name>RECF_VIBVU</name>
<organism>
    <name type="scientific">Vibrio vulnificus (strain CMCP6)</name>
    <dbReference type="NCBI Taxonomy" id="216895"/>
    <lineage>
        <taxon>Bacteria</taxon>
        <taxon>Pseudomonadati</taxon>
        <taxon>Pseudomonadota</taxon>
        <taxon>Gammaproteobacteria</taxon>
        <taxon>Vibrionales</taxon>
        <taxon>Vibrionaceae</taxon>
        <taxon>Vibrio</taxon>
    </lineage>
</organism>
<evidence type="ECO:0000255" key="1">
    <source>
        <dbReference type="HAMAP-Rule" id="MF_00365"/>
    </source>
</evidence>
<feature type="chain" id="PRO_0000196487" description="DNA replication and repair protein RecF">
    <location>
        <begin position="1"/>
        <end position="359"/>
    </location>
</feature>
<feature type="binding site" evidence="1">
    <location>
        <begin position="30"/>
        <end position="37"/>
    </location>
    <ligand>
        <name>ATP</name>
        <dbReference type="ChEBI" id="CHEBI:30616"/>
    </ligand>
</feature>
<accession>Q8DDJ1</accession>